<keyword id="KW-1003">Cell membrane</keyword>
<keyword id="KW-0472">Membrane</keyword>
<keyword id="KW-0653">Protein transport</keyword>
<keyword id="KW-1185">Reference proteome</keyword>
<keyword id="KW-0811">Translocation</keyword>
<keyword id="KW-0812">Transmembrane</keyword>
<keyword id="KW-1133">Transmembrane helix</keyword>
<keyword id="KW-0813">Transport</keyword>
<comment type="function">
    <text evidence="1">Part of the twin-arginine translocation (Tat) system that transports large folded proteins containing a characteristic twin-arginine motif in their signal peptide across membranes. TatA could form the protein-conducting channel of the Tat system.</text>
</comment>
<comment type="subunit">
    <text evidence="1">The Tat system comprises two distinct complexes: a TatABC complex, containing multiple copies of TatA, TatB and TatC subunits, and a separate TatA complex, containing only TatA subunits. Substrates initially bind to the TatABC complex, which probably triggers association of the separate TatA complex to form the active translocon.</text>
</comment>
<comment type="subcellular location">
    <subcellularLocation>
        <location evidence="1">Cell membrane</location>
        <topology evidence="1">Single-pass membrane protein</topology>
    </subcellularLocation>
</comment>
<comment type="similarity">
    <text evidence="1">Belongs to the TatA/E family.</text>
</comment>
<accession>Q4JVQ1</accession>
<feature type="chain" id="PRO_0000336628" description="Sec-independent protein translocase protein TatA">
    <location>
        <begin position="1"/>
        <end position="84"/>
    </location>
</feature>
<feature type="transmembrane region" description="Helical" evidence="1">
    <location>
        <begin position="1"/>
        <end position="21"/>
    </location>
</feature>
<feature type="region of interest" description="Disordered" evidence="2">
    <location>
        <begin position="42"/>
        <end position="84"/>
    </location>
</feature>
<feature type="compositionally biased region" description="Basic and acidic residues" evidence="2">
    <location>
        <begin position="42"/>
        <end position="57"/>
    </location>
</feature>
<feature type="compositionally biased region" description="Polar residues" evidence="2">
    <location>
        <begin position="62"/>
        <end position="77"/>
    </location>
</feature>
<dbReference type="EMBL" id="CR931997">
    <property type="protein sequence ID" value="CAI37106.1"/>
    <property type="molecule type" value="Genomic_DNA"/>
</dbReference>
<dbReference type="RefSeq" id="WP_011273528.1">
    <property type="nucleotide sequence ID" value="NC_007164.1"/>
</dbReference>
<dbReference type="SMR" id="Q4JVQ1"/>
<dbReference type="STRING" id="306537.jk0942"/>
<dbReference type="KEGG" id="cjk:jk0942"/>
<dbReference type="PATRIC" id="fig|306537.10.peg.953"/>
<dbReference type="eggNOG" id="COG1826">
    <property type="taxonomic scope" value="Bacteria"/>
</dbReference>
<dbReference type="HOGENOM" id="CLU_086034_4_0_11"/>
<dbReference type="OrthoDB" id="5245163at2"/>
<dbReference type="Proteomes" id="UP000000545">
    <property type="component" value="Chromosome"/>
</dbReference>
<dbReference type="GO" id="GO:0033281">
    <property type="term" value="C:TAT protein transport complex"/>
    <property type="evidence" value="ECO:0007669"/>
    <property type="project" value="UniProtKB-UniRule"/>
</dbReference>
<dbReference type="GO" id="GO:0008320">
    <property type="term" value="F:protein transmembrane transporter activity"/>
    <property type="evidence" value="ECO:0007669"/>
    <property type="project" value="UniProtKB-UniRule"/>
</dbReference>
<dbReference type="GO" id="GO:0043953">
    <property type="term" value="P:protein transport by the Tat complex"/>
    <property type="evidence" value="ECO:0007669"/>
    <property type="project" value="UniProtKB-UniRule"/>
</dbReference>
<dbReference type="Gene3D" id="1.20.5.3310">
    <property type="match status" value="1"/>
</dbReference>
<dbReference type="HAMAP" id="MF_00236">
    <property type="entry name" value="TatA_E"/>
    <property type="match status" value="1"/>
</dbReference>
<dbReference type="InterPro" id="IPR003369">
    <property type="entry name" value="TatA/B/E"/>
</dbReference>
<dbReference type="InterPro" id="IPR006312">
    <property type="entry name" value="TatA/E"/>
</dbReference>
<dbReference type="NCBIfam" id="NF001854">
    <property type="entry name" value="PRK00575.1"/>
    <property type="match status" value="1"/>
</dbReference>
<dbReference type="NCBIfam" id="TIGR01411">
    <property type="entry name" value="tatAE"/>
    <property type="match status" value="1"/>
</dbReference>
<dbReference type="PANTHER" id="PTHR42982">
    <property type="entry name" value="SEC-INDEPENDENT PROTEIN TRANSLOCASE PROTEIN TATA"/>
    <property type="match status" value="1"/>
</dbReference>
<dbReference type="PANTHER" id="PTHR42982:SF8">
    <property type="entry name" value="SEC-INDEPENDENT PROTEIN TRANSLOCASE PROTEIN TATA"/>
    <property type="match status" value="1"/>
</dbReference>
<dbReference type="Pfam" id="PF02416">
    <property type="entry name" value="TatA_B_E"/>
    <property type="match status" value="1"/>
</dbReference>
<evidence type="ECO:0000255" key="1">
    <source>
        <dbReference type="HAMAP-Rule" id="MF_00236"/>
    </source>
</evidence>
<evidence type="ECO:0000256" key="2">
    <source>
        <dbReference type="SAM" id="MobiDB-lite"/>
    </source>
</evidence>
<gene>
    <name evidence="1" type="primary">tatA</name>
    <name type="ordered locus">jk0942</name>
</gene>
<reference key="1">
    <citation type="journal article" date="2005" name="J. Bacteriol.">
        <title>Complete genome sequence and analysis of the multiresistant nosocomial pathogen Corynebacterium jeikeium K411, a lipid-requiring bacterium of the human skin flora.</title>
        <authorList>
            <person name="Tauch A."/>
            <person name="Kaiser O."/>
            <person name="Hain T."/>
            <person name="Goesmann A."/>
            <person name="Weisshaar B."/>
            <person name="Albersmeier A."/>
            <person name="Bekel T."/>
            <person name="Bischoff N."/>
            <person name="Brune I."/>
            <person name="Chakraborty T."/>
            <person name="Kalinowski J."/>
            <person name="Meyer F."/>
            <person name="Rupp O."/>
            <person name="Schneiker S."/>
            <person name="Viehoever P."/>
            <person name="Puehler A."/>
        </authorList>
    </citation>
    <scope>NUCLEOTIDE SEQUENCE [LARGE SCALE GENOMIC DNA]</scope>
    <source>
        <strain>K411</strain>
    </source>
</reference>
<protein>
    <recommendedName>
        <fullName evidence="1">Sec-independent protein translocase protein TatA</fullName>
    </recommendedName>
</protein>
<organism>
    <name type="scientific">Corynebacterium jeikeium (strain K411)</name>
    <dbReference type="NCBI Taxonomy" id="306537"/>
    <lineage>
        <taxon>Bacteria</taxon>
        <taxon>Bacillati</taxon>
        <taxon>Actinomycetota</taxon>
        <taxon>Actinomycetes</taxon>
        <taxon>Mycobacteriales</taxon>
        <taxon>Corynebacteriaceae</taxon>
        <taxon>Corynebacterium</taxon>
    </lineage>
</organism>
<sequence>MPNLGVPELLIIALVIFLLFGATRLPNAARSLGRSMRIFKSEMDEMKTDGDKKELAEKQAPTAEQQQAQDLAQPKSEQPNEHNA</sequence>
<proteinExistence type="inferred from homology"/>
<name>TATA_CORJK</name>